<accession>A8GP46</accession>
<evidence type="ECO:0000255" key="1">
    <source>
        <dbReference type="HAMAP-Rule" id="MF_00111"/>
    </source>
</evidence>
<proteinExistence type="inferred from homology"/>
<gene>
    <name evidence="1" type="primary">murA</name>
    <name type="ordered locus">A1C_04505</name>
</gene>
<dbReference type="EC" id="2.5.1.7" evidence="1"/>
<dbReference type="EMBL" id="CP000847">
    <property type="protein sequence ID" value="ABV75171.1"/>
    <property type="molecule type" value="Genomic_DNA"/>
</dbReference>
<dbReference type="RefSeq" id="WP_012149801.1">
    <property type="nucleotide sequence ID" value="NC_009881.1"/>
</dbReference>
<dbReference type="SMR" id="A8GP46"/>
<dbReference type="STRING" id="293614.A1C_04505"/>
<dbReference type="KEGG" id="rak:A1C_04505"/>
<dbReference type="eggNOG" id="COG0766">
    <property type="taxonomic scope" value="Bacteria"/>
</dbReference>
<dbReference type="HOGENOM" id="CLU_027387_0_0_5"/>
<dbReference type="UniPathway" id="UPA00219"/>
<dbReference type="Proteomes" id="UP000006830">
    <property type="component" value="Chromosome"/>
</dbReference>
<dbReference type="GO" id="GO:0005737">
    <property type="term" value="C:cytoplasm"/>
    <property type="evidence" value="ECO:0007669"/>
    <property type="project" value="UniProtKB-SubCell"/>
</dbReference>
<dbReference type="GO" id="GO:0008760">
    <property type="term" value="F:UDP-N-acetylglucosamine 1-carboxyvinyltransferase activity"/>
    <property type="evidence" value="ECO:0007669"/>
    <property type="project" value="UniProtKB-UniRule"/>
</dbReference>
<dbReference type="GO" id="GO:0051301">
    <property type="term" value="P:cell division"/>
    <property type="evidence" value="ECO:0007669"/>
    <property type="project" value="UniProtKB-KW"/>
</dbReference>
<dbReference type="GO" id="GO:0071555">
    <property type="term" value="P:cell wall organization"/>
    <property type="evidence" value="ECO:0007669"/>
    <property type="project" value="UniProtKB-KW"/>
</dbReference>
<dbReference type="GO" id="GO:0009252">
    <property type="term" value="P:peptidoglycan biosynthetic process"/>
    <property type="evidence" value="ECO:0007669"/>
    <property type="project" value="UniProtKB-UniRule"/>
</dbReference>
<dbReference type="GO" id="GO:0008360">
    <property type="term" value="P:regulation of cell shape"/>
    <property type="evidence" value="ECO:0007669"/>
    <property type="project" value="UniProtKB-KW"/>
</dbReference>
<dbReference type="GO" id="GO:0019277">
    <property type="term" value="P:UDP-N-acetylgalactosamine biosynthetic process"/>
    <property type="evidence" value="ECO:0007669"/>
    <property type="project" value="InterPro"/>
</dbReference>
<dbReference type="CDD" id="cd01555">
    <property type="entry name" value="UdpNAET"/>
    <property type="match status" value="1"/>
</dbReference>
<dbReference type="FunFam" id="3.65.10.10:FF:000001">
    <property type="entry name" value="UDP-N-acetylglucosamine 1-carboxyvinyltransferase"/>
    <property type="match status" value="1"/>
</dbReference>
<dbReference type="Gene3D" id="3.65.10.10">
    <property type="entry name" value="Enolpyruvate transferase domain"/>
    <property type="match status" value="2"/>
</dbReference>
<dbReference type="HAMAP" id="MF_00111">
    <property type="entry name" value="MurA"/>
    <property type="match status" value="1"/>
</dbReference>
<dbReference type="InterPro" id="IPR001986">
    <property type="entry name" value="Enolpyruvate_Tfrase_dom"/>
</dbReference>
<dbReference type="InterPro" id="IPR036968">
    <property type="entry name" value="Enolpyruvate_Tfrase_sf"/>
</dbReference>
<dbReference type="InterPro" id="IPR050068">
    <property type="entry name" value="MurA_subfamily"/>
</dbReference>
<dbReference type="InterPro" id="IPR013792">
    <property type="entry name" value="RNA3'P_cycl/enolpyr_Trfase_a/b"/>
</dbReference>
<dbReference type="InterPro" id="IPR005750">
    <property type="entry name" value="UDP_GlcNAc_COvinyl_MurA"/>
</dbReference>
<dbReference type="NCBIfam" id="TIGR01072">
    <property type="entry name" value="murA"/>
    <property type="match status" value="1"/>
</dbReference>
<dbReference type="NCBIfam" id="NF006873">
    <property type="entry name" value="PRK09369.1"/>
    <property type="match status" value="1"/>
</dbReference>
<dbReference type="PANTHER" id="PTHR43783">
    <property type="entry name" value="UDP-N-ACETYLGLUCOSAMINE 1-CARBOXYVINYLTRANSFERASE"/>
    <property type="match status" value="1"/>
</dbReference>
<dbReference type="PANTHER" id="PTHR43783:SF1">
    <property type="entry name" value="UDP-N-ACETYLGLUCOSAMINE 1-CARBOXYVINYLTRANSFERASE"/>
    <property type="match status" value="1"/>
</dbReference>
<dbReference type="Pfam" id="PF00275">
    <property type="entry name" value="EPSP_synthase"/>
    <property type="match status" value="1"/>
</dbReference>
<dbReference type="SUPFAM" id="SSF55205">
    <property type="entry name" value="EPT/RTPC-like"/>
    <property type="match status" value="1"/>
</dbReference>
<name>MURA_RICAH</name>
<reference key="1">
    <citation type="submission" date="2007-09" db="EMBL/GenBank/DDBJ databases">
        <title>Complete genome sequence of Rickettsia akari.</title>
        <authorList>
            <person name="Madan A."/>
            <person name="Fahey J."/>
            <person name="Helton E."/>
            <person name="Ketteman M."/>
            <person name="Madan A."/>
            <person name="Rodrigues S."/>
            <person name="Sanchez A."/>
            <person name="Whiting M."/>
            <person name="Dasch G."/>
            <person name="Eremeeva M."/>
        </authorList>
    </citation>
    <scope>NUCLEOTIDE SEQUENCE [LARGE SCALE GENOMIC DNA]</scope>
    <source>
        <strain>Hartford</strain>
    </source>
</reference>
<feature type="chain" id="PRO_1000023090" description="UDP-N-acetylglucosamine 1-carboxyvinyltransferase">
    <location>
        <begin position="1"/>
        <end position="419"/>
    </location>
</feature>
<feature type="active site" description="Proton donor" evidence="1">
    <location>
        <position position="119"/>
    </location>
</feature>
<feature type="binding site" evidence="1">
    <location>
        <begin position="22"/>
        <end position="23"/>
    </location>
    <ligand>
        <name>phosphoenolpyruvate</name>
        <dbReference type="ChEBI" id="CHEBI:58702"/>
    </ligand>
</feature>
<feature type="binding site" evidence="1">
    <location>
        <position position="95"/>
    </location>
    <ligand>
        <name>UDP-N-acetyl-alpha-D-glucosamine</name>
        <dbReference type="ChEBI" id="CHEBI:57705"/>
    </ligand>
</feature>
<feature type="binding site" evidence="1">
    <location>
        <begin position="164"/>
        <end position="167"/>
    </location>
    <ligand>
        <name>UDP-N-acetyl-alpha-D-glucosamine</name>
        <dbReference type="ChEBI" id="CHEBI:57705"/>
    </ligand>
</feature>
<feature type="binding site" evidence="1">
    <location>
        <position position="308"/>
    </location>
    <ligand>
        <name>UDP-N-acetyl-alpha-D-glucosamine</name>
        <dbReference type="ChEBI" id="CHEBI:57705"/>
    </ligand>
</feature>
<feature type="binding site" evidence="1">
    <location>
        <position position="330"/>
    </location>
    <ligand>
        <name>UDP-N-acetyl-alpha-D-glucosamine</name>
        <dbReference type="ChEBI" id="CHEBI:57705"/>
    </ligand>
</feature>
<feature type="modified residue" description="2-(S-cysteinyl)pyruvic acid O-phosphothioketal" evidence="1">
    <location>
        <position position="119"/>
    </location>
</feature>
<protein>
    <recommendedName>
        <fullName evidence="1">UDP-N-acetylglucosamine 1-carboxyvinyltransferase</fullName>
        <ecNumber evidence="1">2.5.1.7</ecNumber>
    </recommendedName>
    <alternativeName>
        <fullName evidence="1">Enoylpyruvate transferase</fullName>
    </alternativeName>
    <alternativeName>
        <fullName evidence="1">UDP-N-acetylglucosamine enolpyruvyl transferase</fullName>
        <shortName evidence="1">EPT</shortName>
    </alternativeName>
</protein>
<sequence>MQKLIIHGGKPLKGNINISGAKNAVLPIMAASILTDKLHITNVPKLTDVSTMKDLLRSHGACIEIIEHTDEFELIINTGNINNFTADYEIVRKMRASIWVLGPLLTKYGKAKVSLPGGCAIGARQVDLHIAVLKAMGATIEIEDGYINASSKGRLKGTHFVFDKVSVGATINAILAAVLAEGETVLFNCALEPEIVDLCNCLIKMGADIAGVGTSEITIKGKDSLNKMSYKVLSDRIEAGTYMFAAAITKGDVKICGIDYHIIENIALKLIETGIKVAPINNGVQVTYEGTLNSVDLETNPYPGFATDLQAQFMSLMTLSSGVSMITENIFENRFMHVPELCRMGADIVVRGNKAVVRGVEMLKGAEVMASDLRASVSLILAGLSTNSKTVLHRIYHLDRGFQDLEKKLSNCGADIKRV</sequence>
<comment type="function">
    <text evidence="1">Cell wall formation. Adds enolpyruvyl to UDP-N-acetylglucosamine.</text>
</comment>
<comment type="catalytic activity">
    <reaction evidence="1">
        <text>phosphoenolpyruvate + UDP-N-acetyl-alpha-D-glucosamine = UDP-N-acetyl-3-O-(1-carboxyvinyl)-alpha-D-glucosamine + phosphate</text>
        <dbReference type="Rhea" id="RHEA:18681"/>
        <dbReference type="ChEBI" id="CHEBI:43474"/>
        <dbReference type="ChEBI" id="CHEBI:57705"/>
        <dbReference type="ChEBI" id="CHEBI:58702"/>
        <dbReference type="ChEBI" id="CHEBI:68483"/>
        <dbReference type="EC" id="2.5.1.7"/>
    </reaction>
</comment>
<comment type="pathway">
    <text evidence="1">Cell wall biogenesis; peptidoglycan biosynthesis.</text>
</comment>
<comment type="subcellular location">
    <subcellularLocation>
        <location evidence="1">Cytoplasm</location>
    </subcellularLocation>
</comment>
<comment type="similarity">
    <text evidence="1">Belongs to the EPSP synthase family. MurA subfamily.</text>
</comment>
<organism>
    <name type="scientific">Rickettsia akari (strain Hartford)</name>
    <dbReference type="NCBI Taxonomy" id="293614"/>
    <lineage>
        <taxon>Bacteria</taxon>
        <taxon>Pseudomonadati</taxon>
        <taxon>Pseudomonadota</taxon>
        <taxon>Alphaproteobacteria</taxon>
        <taxon>Rickettsiales</taxon>
        <taxon>Rickettsiaceae</taxon>
        <taxon>Rickettsieae</taxon>
        <taxon>Rickettsia</taxon>
        <taxon>spotted fever group</taxon>
    </lineage>
</organism>
<keyword id="KW-0131">Cell cycle</keyword>
<keyword id="KW-0132">Cell division</keyword>
<keyword id="KW-0133">Cell shape</keyword>
<keyword id="KW-0961">Cell wall biogenesis/degradation</keyword>
<keyword id="KW-0963">Cytoplasm</keyword>
<keyword id="KW-0573">Peptidoglycan synthesis</keyword>
<keyword id="KW-0670">Pyruvate</keyword>
<keyword id="KW-0808">Transferase</keyword>